<comment type="function">
    <text evidence="1">Provides the (R)-glutamate required for cell wall biosynthesis.</text>
</comment>
<comment type="catalytic activity">
    <reaction evidence="1">
        <text>L-glutamate = D-glutamate</text>
        <dbReference type="Rhea" id="RHEA:12813"/>
        <dbReference type="ChEBI" id="CHEBI:29985"/>
        <dbReference type="ChEBI" id="CHEBI:29986"/>
        <dbReference type="EC" id="5.1.1.3"/>
    </reaction>
</comment>
<comment type="pathway">
    <text evidence="1">Cell wall biogenesis; peptidoglycan biosynthesis.</text>
</comment>
<comment type="similarity">
    <text evidence="1">Belongs to the aspartate/glutamate racemases family.</text>
</comment>
<keyword id="KW-0133">Cell shape</keyword>
<keyword id="KW-0961">Cell wall biogenesis/degradation</keyword>
<keyword id="KW-0413">Isomerase</keyword>
<keyword id="KW-0573">Peptidoglycan synthesis</keyword>
<reference key="1">
    <citation type="journal article" date="2004" name="Nucleic Acids Res.">
        <title>Whole genome comparisons of serotype 4b and 1/2a strains of the food-borne pathogen Listeria monocytogenes reveal new insights into the core genome components of this species.</title>
        <authorList>
            <person name="Nelson K.E."/>
            <person name="Fouts D.E."/>
            <person name="Mongodin E.F."/>
            <person name="Ravel J."/>
            <person name="DeBoy R.T."/>
            <person name="Kolonay J.F."/>
            <person name="Rasko D.A."/>
            <person name="Angiuoli S.V."/>
            <person name="Gill S.R."/>
            <person name="Paulsen I.T."/>
            <person name="Peterson J.D."/>
            <person name="White O."/>
            <person name="Nelson W.C."/>
            <person name="Nierman W.C."/>
            <person name="Beanan M.J."/>
            <person name="Brinkac L.M."/>
            <person name="Daugherty S.C."/>
            <person name="Dodson R.J."/>
            <person name="Durkin A.S."/>
            <person name="Madupu R."/>
            <person name="Haft D.H."/>
            <person name="Selengut J."/>
            <person name="Van Aken S.E."/>
            <person name="Khouri H.M."/>
            <person name="Fedorova N."/>
            <person name="Forberger H.A."/>
            <person name="Tran B."/>
            <person name="Kathariou S."/>
            <person name="Wonderling L.D."/>
            <person name="Uhlich G.A."/>
            <person name="Bayles D.O."/>
            <person name="Luchansky J.B."/>
            <person name="Fraser C.M."/>
        </authorList>
    </citation>
    <scope>NUCLEOTIDE SEQUENCE [LARGE SCALE GENOMIC DNA]</scope>
    <source>
        <strain>F2365</strain>
    </source>
</reference>
<proteinExistence type="inferred from homology"/>
<sequence>MKQAIGFIDSGVGGLTVVREVLKQLPHEQVYYLGDTARCPYGPRDKEEVAKFTWEMTNFLVDRGIKMLVIACNTATAAALYDIREKLDIPVIGVIQPGSRAALKATRNNKIGVLGTLGTVESMAYPTALKGLNRRVEVDSLACPKFVSVVESGEYKSAIAKKVVAESLLPLKSTKIDTVILGCTHYPLLKPIIENFMGDGVAVINSGEETASEVSALLDYHNLLDATDEEIEHRFFTTGSTQIFKDIAKDWLNMPDMTVEHIKLGK</sequence>
<accession>Q720J2</accession>
<feature type="chain" id="PRO_0000095486" description="Glutamate racemase">
    <location>
        <begin position="1"/>
        <end position="266"/>
    </location>
</feature>
<feature type="active site" description="Proton donor/acceptor" evidence="1">
    <location>
        <position position="72"/>
    </location>
</feature>
<feature type="active site" description="Proton donor/acceptor" evidence="1">
    <location>
        <position position="183"/>
    </location>
</feature>
<feature type="binding site" evidence="1">
    <location>
        <begin position="9"/>
        <end position="10"/>
    </location>
    <ligand>
        <name>substrate</name>
    </ligand>
</feature>
<feature type="binding site" evidence="1">
    <location>
        <begin position="41"/>
        <end position="42"/>
    </location>
    <ligand>
        <name>substrate</name>
    </ligand>
</feature>
<feature type="binding site" evidence="1">
    <location>
        <begin position="73"/>
        <end position="74"/>
    </location>
    <ligand>
        <name>substrate</name>
    </ligand>
</feature>
<feature type="binding site" evidence="1">
    <location>
        <begin position="184"/>
        <end position="185"/>
    </location>
    <ligand>
        <name>substrate</name>
    </ligand>
</feature>
<name>MURI_LISMF</name>
<protein>
    <recommendedName>
        <fullName evidence="1">Glutamate racemase</fullName>
        <ecNumber evidence="1">5.1.1.3</ecNumber>
    </recommendedName>
</protein>
<organism>
    <name type="scientific">Listeria monocytogenes serotype 4b (strain F2365)</name>
    <dbReference type="NCBI Taxonomy" id="265669"/>
    <lineage>
        <taxon>Bacteria</taxon>
        <taxon>Bacillati</taxon>
        <taxon>Bacillota</taxon>
        <taxon>Bacilli</taxon>
        <taxon>Bacillales</taxon>
        <taxon>Listeriaceae</taxon>
        <taxon>Listeria</taxon>
    </lineage>
</organism>
<evidence type="ECO:0000255" key="1">
    <source>
        <dbReference type="HAMAP-Rule" id="MF_00258"/>
    </source>
</evidence>
<dbReference type="EC" id="5.1.1.3" evidence="1"/>
<dbReference type="EMBL" id="AE017262">
    <property type="protein sequence ID" value="AAT04022.1"/>
    <property type="molecule type" value="Genomic_DNA"/>
</dbReference>
<dbReference type="SMR" id="Q720J2"/>
<dbReference type="KEGG" id="lmf:LMOf2365_1246"/>
<dbReference type="HOGENOM" id="CLU_052344_0_2_9"/>
<dbReference type="UniPathway" id="UPA00219"/>
<dbReference type="GO" id="GO:0008881">
    <property type="term" value="F:glutamate racemase activity"/>
    <property type="evidence" value="ECO:0007669"/>
    <property type="project" value="UniProtKB-UniRule"/>
</dbReference>
<dbReference type="GO" id="GO:0071555">
    <property type="term" value="P:cell wall organization"/>
    <property type="evidence" value="ECO:0007669"/>
    <property type="project" value="UniProtKB-KW"/>
</dbReference>
<dbReference type="GO" id="GO:0009252">
    <property type="term" value="P:peptidoglycan biosynthetic process"/>
    <property type="evidence" value="ECO:0007669"/>
    <property type="project" value="UniProtKB-UniRule"/>
</dbReference>
<dbReference type="GO" id="GO:0008360">
    <property type="term" value="P:regulation of cell shape"/>
    <property type="evidence" value="ECO:0007669"/>
    <property type="project" value="UniProtKB-KW"/>
</dbReference>
<dbReference type="FunFam" id="3.40.50.1860:FF:000002">
    <property type="entry name" value="Glutamate racemase"/>
    <property type="match status" value="1"/>
</dbReference>
<dbReference type="Gene3D" id="3.40.50.1860">
    <property type="match status" value="2"/>
</dbReference>
<dbReference type="HAMAP" id="MF_00258">
    <property type="entry name" value="Glu_racemase"/>
    <property type="match status" value="1"/>
</dbReference>
<dbReference type="InterPro" id="IPR015942">
    <property type="entry name" value="Asp/Glu/hydantoin_racemase"/>
</dbReference>
<dbReference type="InterPro" id="IPR001920">
    <property type="entry name" value="Asp/Glu_race"/>
</dbReference>
<dbReference type="InterPro" id="IPR018187">
    <property type="entry name" value="Asp/Glu_racemase_AS_1"/>
</dbReference>
<dbReference type="InterPro" id="IPR033134">
    <property type="entry name" value="Asp/Glu_racemase_AS_2"/>
</dbReference>
<dbReference type="InterPro" id="IPR004391">
    <property type="entry name" value="Glu_race"/>
</dbReference>
<dbReference type="NCBIfam" id="TIGR00067">
    <property type="entry name" value="glut_race"/>
    <property type="match status" value="1"/>
</dbReference>
<dbReference type="NCBIfam" id="NF002035">
    <property type="entry name" value="PRK00865.1-3"/>
    <property type="match status" value="1"/>
</dbReference>
<dbReference type="PANTHER" id="PTHR21198">
    <property type="entry name" value="GLUTAMATE RACEMASE"/>
    <property type="match status" value="1"/>
</dbReference>
<dbReference type="PANTHER" id="PTHR21198:SF2">
    <property type="entry name" value="GLUTAMATE RACEMASE"/>
    <property type="match status" value="1"/>
</dbReference>
<dbReference type="Pfam" id="PF01177">
    <property type="entry name" value="Asp_Glu_race"/>
    <property type="match status" value="1"/>
</dbReference>
<dbReference type="SUPFAM" id="SSF53681">
    <property type="entry name" value="Aspartate/glutamate racemase"/>
    <property type="match status" value="2"/>
</dbReference>
<dbReference type="PROSITE" id="PS00923">
    <property type="entry name" value="ASP_GLU_RACEMASE_1"/>
    <property type="match status" value="1"/>
</dbReference>
<dbReference type="PROSITE" id="PS00924">
    <property type="entry name" value="ASP_GLU_RACEMASE_2"/>
    <property type="match status" value="1"/>
</dbReference>
<gene>
    <name evidence="1" type="primary">murI</name>
    <name type="ordered locus">LMOf2365_1246</name>
</gene>